<feature type="chain" id="PRO_0000403003" description="FMN reductase (NADH) RutF">
    <location>
        <begin position="1"/>
        <end position="164"/>
    </location>
</feature>
<dbReference type="EC" id="1.5.1.42" evidence="1"/>
<dbReference type="EMBL" id="CP000948">
    <property type="protein sequence ID" value="ACB02208.1"/>
    <property type="molecule type" value="Genomic_DNA"/>
</dbReference>
<dbReference type="RefSeq" id="WP_001028083.1">
    <property type="nucleotide sequence ID" value="NC_010473.1"/>
</dbReference>
<dbReference type="SMR" id="B1X9C8"/>
<dbReference type="KEGG" id="ecd:ECDH10B_1079"/>
<dbReference type="HOGENOM" id="CLU_059021_2_2_6"/>
<dbReference type="GO" id="GO:0010181">
    <property type="term" value="F:FMN binding"/>
    <property type="evidence" value="ECO:0007669"/>
    <property type="project" value="InterPro"/>
</dbReference>
<dbReference type="GO" id="GO:0052874">
    <property type="term" value="F:FMN reductase (NADH) activity"/>
    <property type="evidence" value="ECO:0007669"/>
    <property type="project" value="UniProtKB-EC"/>
</dbReference>
<dbReference type="GO" id="GO:0008752">
    <property type="term" value="F:FMN reductase [NAD(P)H] activity"/>
    <property type="evidence" value="ECO:0007669"/>
    <property type="project" value="InterPro"/>
</dbReference>
<dbReference type="GO" id="GO:0042602">
    <property type="term" value="F:riboflavin reductase (NADPH) activity"/>
    <property type="evidence" value="ECO:0007669"/>
    <property type="project" value="UniProtKB-UniRule"/>
</dbReference>
<dbReference type="GO" id="GO:0019740">
    <property type="term" value="P:nitrogen utilization"/>
    <property type="evidence" value="ECO:0007669"/>
    <property type="project" value="UniProtKB-UniRule"/>
</dbReference>
<dbReference type="GO" id="GO:0006212">
    <property type="term" value="P:uracil catabolic process"/>
    <property type="evidence" value="ECO:0007669"/>
    <property type="project" value="UniProtKB-UniRule"/>
</dbReference>
<dbReference type="FunFam" id="2.30.110.10:FF:000002">
    <property type="entry name" value="FMN reductase (NADH) RutF"/>
    <property type="match status" value="1"/>
</dbReference>
<dbReference type="Gene3D" id="2.30.110.10">
    <property type="entry name" value="Electron Transport, Fmn-binding Protein, Chain A"/>
    <property type="match status" value="1"/>
</dbReference>
<dbReference type="HAMAP" id="MF_00833">
    <property type="entry name" value="RutF"/>
    <property type="match status" value="1"/>
</dbReference>
<dbReference type="InterPro" id="IPR002563">
    <property type="entry name" value="Flavin_Rdtase-like_dom"/>
</dbReference>
<dbReference type="InterPro" id="IPR050268">
    <property type="entry name" value="NADH-dep_flavin_reductase"/>
</dbReference>
<dbReference type="InterPro" id="IPR019917">
    <property type="entry name" value="RutF"/>
</dbReference>
<dbReference type="InterPro" id="IPR012349">
    <property type="entry name" value="Split_barrel_FMN-bd"/>
</dbReference>
<dbReference type="NCBIfam" id="TIGR03615">
    <property type="entry name" value="RutF"/>
    <property type="match status" value="1"/>
</dbReference>
<dbReference type="PANTHER" id="PTHR30466">
    <property type="entry name" value="FLAVIN REDUCTASE"/>
    <property type="match status" value="1"/>
</dbReference>
<dbReference type="PANTHER" id="PTHR30466:SF1">
    <property type="entry name" value="FMN REDUCTASE (NADH) RUTF"/>
    <property type="match status" value="1"/>
</dbReference>
<dbReference type="Pfam" id="PF01613">
    <property type="entry name" value="Flavin_Reduct"/>
    <property type="match status" value="1"/>
</dbReference>
<dbReference type="SMART" id="SM00903">
    <property type="entry name" value="Flavin_Reduct"/>
    <property type="match status" value="1"/>
</dbReference>
<dbReference type="SUPFAM" id="SSF50475">
    <property type="entry name" value="FMN-binding split barrel"/>
    <property type="match status" value="1"/>
</dbReference>
<reference key="1">
    <citation type="journal article" date="2008" name="J. Bacteriol.">
        <title>The complete genome sequence of Escherichia coli DH10B: insights into the biology of a laboratory workhorse.</title>
        <authorList>
            <person name="Durfee T."/>
            <person name="Nelson R."/>
            <person name="Baldwin S."/>
            <person name="Plunkett G. III"/>
            <person name="Burland V."/>
            <person name="Mau B."/>
            <person name="Petrosino J.F."/>
            <person name="Qin X."/>
            <person name="Muzny D.M."/>
            <person name="Ayele M."/>
            <person name="Gibbs R.A."/>
            <person name="Csorgo B."/>
            <person name="Posfai G."/>
            <person name="Weinstock G.M."/>
            <person name="Blattner F.R."/>
        </authorList>
    </citation>
    <scope>NUCLEOTIDE SEQUENCE [LARGE SCALE GENOMIC DNA]</scope>
    <source>
        <strain>K12 / DH10B</strain>
    </source>
</reference>
<organism>
    <name type="scientific">Escherichia coli (strain K12 / DH10B)</name>
    <dbReference type="NCBI Taxonomy" id="316385"/>
    <lineage>
        <taxon>Bacteria</taxon>
        <taxon>Pseudomonadati</taxon>
        <taxon>Pseudomonadota</taxon>
        <taxon>Gammaproteobacteria</taxon>
        <taxon>Enterobacterales</taxon>
        <taxon>Enterobacteriaceae</taxon>
        <taxon>Escherichia</taxon>
    </lineage>
</organism>
<keyword id="KW-0285">Flavoprotein</keyword>
<keyword id="KW-0288">FMN</keyword>
<keyword id="KW-0520">NAD</keyword>
<keyword id="KW-0560">Oxidoreductase</keyword>
<evidence type="ECO:0000255" key="1">
    <source>
        <dbReference type="HAMAP-Rule" id="MF_00833"/>
    </source>
</evidence>
<comment type="function">
    <text evidence="1">Catalyzes the reduction of FMN to FMNH2 which is used to reduce pyrimidine by RutA via the Rut pathway.</text>
</comment>
<comment type="catalytic activity">
    <reaction evidence="1">
        <text>FMNH2 + NAD(+) = FMN + NADH + 2 H(+)</text>
        <dbReference type="Rhea" id="RHEA:21620"/>
        <dbReference type="ChEBI" id="CHEBI:15378"/>
        <dbReference type="ChEBI" id="CHEBI:57540"/>
        <dbReference type="ChEBI" id="CHEBI:57618"/>
        <dbReference type="ChEBI" id="CHEBI:57945"/>
        <dbReference type="ChEBI" id="CHEBI:58210"/>
        <dbReference type="EC" id="1.5.1.42"/>
    </reaction>
</comment>
<comment type="induction">
    <text evidence="1">Up-regulated by the nitrogen regulatory protein C (NtrC also called GlnG) and repressed by RutR.</text>
</comment>
<comment type="similarity">
    <text evidence="1">Belongs to the non-flavoprotein flavin reductase family. RutF subfamily.</text>
</comment>
<protein>
    <recommendedName>
        <fullName evidence="1">FMN reductase (NADH) RutF</fullName>
        <ecNumber evidence="1">1.5.1.42</ecNumber>
    </recommendedName>
    <alternativeName>
        <fullName evidence="1">FMN reductase</fullName>
    </alternativeName>
    <alternativeName>
        <fullName evidence="1">NADH-flavin reductase RutF</fullName>
    </alternativeName>
    <alternativeName>
        <fullName evidence="1">NADH:flavin oxidoreductase</fullName>
    </alternativeName>
</protein>
<name>RUTF_ECODH</name>
<gene>
    <name evidence="1" type="primary">rutF</name>
    <name type="ordered locus">ECDH10B_1079</name>
</gene>
<sequence length="164" mass="17749">MNIVDQQTFRDAMSCMGAAVNIITTDGPAGRAGFTASAVCSVTDTPPTLLVCLNRGASVWPAFNENRTLCVNTLSAGQEPLSNLFGGKTPMEHRFAAARWQTGVTGCPQLEEALVSFDCRISQVVSVGTHDILFCAIEAIHRHTTPYGLVWFDRSYHALMRPAC</sequence>
<proteinExistence type="inferred from homology"/>
<accession>B1X9C8</accession>